<dbReference type="EC" id="3.5.1.49" evidence="1"/>
<dbReference type="EMBL" id="BA000040">
    <property type="protein sequence ID" value="BAC51409.1"/>
    <property type="molecule type" value="Genomic_DNA"/>
</dbReference>
<dbReference type="RefSeq" id="NP_772784.1">
    <property type="nucleotide sequence ID" value="NC_004463.1"/>
</dbReference>
<dbReference type="RefSeq" id="WP_011088885.1">
    <property type="nucleotide sequence ID" value="NC_004463.1"/>
</dbReference>
<dbReference type="SMR" id="Q89H51"/>
<dbReference type="STRING" id="224911.AAV28_28265"/>
<dbReference type="EnsemblBacteria" id="BAC51409">
    <property type="protein sequence ID" value="BAC51409"/>
    <property type="gene ID" value="BAC51409"/>
</dbReference>
<dbReference type="GeneID" id="46493133"/>
<dbReference type="KEGG" id="bja:blr6144"/>
<dbReference type="PATRIC" id="fig|224911.44.peg.6107"/>
<dbReference type="eggNOG" id="COG0388">
    <property type="taxonomic scope" value="Bacteria"/>
</dbReference>
<dbReference type="HOGENOM" id="CLU_071797_0_0_5"/>
<dbReference type="InParanoid" id="Q89H51"/>
<dbReference type="OrthoDB" id="9803803at2"/>
<dbReference type="PhylomeDB" id="Q89H51"/>
<dbReference type="Proteomes" id="UP000002526">
    <property type="component" value="Chromosome"/>
</dbReference>
<dbReference type="GO" id="GO:0004328">
    <property type="term" value="F:formamidase activity"/>
    <property type="evidence" value="ECO:0007669"/>
    <property type="project" value="UniProtKB-UniRule"/>
</dbReference>
<dbReference type="GO" id="GO:0050126">
    <property type="term" value="F:N-carbamoylputrescine amidase activity"/>
    <property type="evidence" value="ECO:0000318"/>
    <property type="project" value="GO_Central"/>
</dbReference>
<dbReference type="GO" id="GO:0033388">
    <property type="term" value="P:putrescine biosynthetic process from arginine"/>
    <property type="evidence" value="ECO:0000318"/>
    <property type="project" value="GO_Central"/>
</dbReference>
<dbReference type="CDD" id="cd07565">
    <property type="entry name" value="aliphatic_amidase"/>
    <property type="match status" value="1"/>
</dbReference>
<dbReference type="Gene3D" id="3.60.110.10">
    <property type="entry name" value="Carbon-nitrogen hydrolase"/>
    <property type="match status" value="1"/>
</dbReference>
<dbReference type="HAMAP" id="MF_01243">
    <property type="entry name" value="Formamidase"/>
    <property type="match status" value="1"/>
</dbReference>
<dbReference type="InterPro" id="IPR050345">
    <property type="entry name" value="Aliph_Amidase/BUP"/>
</dbReference>
<dbReference type="InterPro" id="IPR003010">
    <property type="entry name" value="C-N_Hydrolase"/>
</dbReference>
<dbReference type="InterPro" id="IPR036526">
    <property type="entry name" value="C-N_Hydrolase_sf"/>
</dbReference>
<dbReference type="InterPro" id="IPR022843">
    <property type="entry name" value="Formamidase"/>
</dbReference>
<dbReference type="NCBIfam" id="NF009803">
    <property type="entry name" value="PRK13287.1"/>
    <property type="match status" value="1"/>
</dbReference>
<dbReference type="PANTHER" id="PTHR43674:SF15">
    <property type="entry name" value="FORMAMIDASE"/>
    <property type="match status" value="1"/>
</dbReference>
<dbReference type="PANTHER" id="PTHR43674">
    <property type="entry name" value="NITRILASE C965.09-RELATED"/>
    <property type="match status" value="1"/>
</dbReference>
<dbReference type="Pfam" id="PF00795">
    <property type="entry name" value="CN_hydrolase"/>
    <property type="match status" value="1"/>
</dbReference>
<dbReference type="SUPFAM" id="SSF56317">
    <property type="entry name" value="Carbon-nitrogen hydrolase"/>
    <property type="match status" value="1"/>
</dbReference>
<dbReference type="PROSITE" id="PS50263">
    <property type="entry name" value="CN_HYDROLASE"/>
    <property type="match status" value="1"/>
</dbReference>
<protein>
    <recommendedName>
        <fullName evidence="1">Formamidase</fullName>
        <ecNumber evidence="1">3.5.1.49</ecNumber>
    </recommendedName>
    <alternativeName>
        <fullName evidence="1">Formamide amidohydrolase</fullName>
    </alternativeName>
</protein>
<sequence length="337" mass="37343">MNGLGGLNKSPEGVVIGLVQLQLPNVVTRADLARQTERIVWMVGKARRNLSTMDLVVFPEYSLHGLSMDTNPEIMCRLDGPEVTAFKKACVDNRIWGCFSIMEFNPHGNPYNSGLIIDDHGEIKLYYRKLHPWIPVEPWEPGDIGIPVIEGPKGARIALIICHDGMFPEMARECAYKGAEIMIRTAGYTAPIREAWRFTNQANSFQNLMVTANVCMCGSDGSFDSMGEGMIVNFDGAVLAHGTTGRADEIITAEVRPDLVREARINWGVENNIYQLWHRGYVAVKGGAMDCPYTFMQDMVAGTFRLPWEDQVKVTDGSSCGFPAPTRMYGKTAKAAE</sequence>
<gene>
    <name evidence="1" type="primary">amiF</name>
    <name type="ordered locus">blr6144</name>
</gene>
<evidence type="ECO:0000255" key="1">
    <source>
        <dbReference type="HAMAP-Rule" id="MF_01243"/>
    </source>
</evidence>
<evidence type="ECO:0000255" key="2">
    <source>
        <dbReference type="PROSITE-ProRule" id="PRU00054"/>
    </source>
</evidence>
<keyword id="KW-0378">Hydrolase</keyword>
<keyword id="KW-1185">Reference proteome</keyword>
<reference key="1">
    <citation type="journal article" date="2002" name="DNA Res.">
        <title>Complete genomic sequence of nitrogen-fixing symbiotic bacterium Bradyrhizobium japonicum USDA110.</title>
        <authorList>
            <person name="Kaneko T."/>
            <person name="Nakamura Y."/>
            <person name="Sato S."/>
            <person name="Minamisawa K."/>
            <person name="Uchiumi T."/>
            <person name="Sasamoto S."/>
            <person name="Watanabe A."/>
            <person name="Idesawa K."/>
            <person name="Iriguchi M."/>
            <person name="Kawashima K."/>
            <person name="Kohara M."/>
            <person name="Matsumoto M."/>
            <person name="Shimpo S."/>
            <person name="Tsuruoka H."/>
            <person name="Wada T."/>
            <person name="Yamada M."/>
            <person name="Tabata S."/>
        </authorList>
    </citation>
    <scope>NUCLEOTIDE SEQUENCE [LARGE SCALE GENOMIC DNA]</scope>
    <source>
        <strain>JCM 10833 / BCRC 13528 / IAM 13628 / NBRC 14792 / USDA 110</strain>
    </source>
</reference>
<comment type="function">
    <text evidence="1">Is an aliphatic amidase with a restricted substrate specificity, as it only hydrolyzes formamide.</text>
</comment>
<comment type="catalytic activity">
    <reaction evidence="1">
        <text>formamide + H2O = formate + NH4(+)</text>
        <dbReference type="Rhea" id="RHEA:21948"/>
        <dbReference type="ChEBI" id="CHEBI:15377"/>
        <dbReference type="ChEBI" id="CHEBI:15740"/>
        <dbReference type="ChEBI" id="CHEBI:16397"/>
        <dbReference type="ChEBI" id="CHEBI:28938"/>
        <dbReference type="EC" id="3.5.1.49"/>
    </reaction>
</comment>
<comment type="similarity">
    <text evidence="1">Belongs to the carbon-nitrogen hydrolase superfamily. Aliphatic amidase family.</text>
</comment>
<feature type="chain" id="PRO_0000204064" description="Formamidase">
    <location>
        <begin position="1"/>
        <end position="337"/>
    </location>
</feature>
<feature type="domain" description="CN hydrolase" evidence="2">
    <location>
        <begin position="14"/>
        <end position="257"/>
    </location>
</feature>
<feature type="active site" description="Proton acceptor" evidence="1">
    <location>
        <position position="60"/>
    </location>
</feature>
<feature type="active site" description="Proton donor" evidence="1">
    <location>
        <position position="129"/>
    </location>
</feature>
<feature type="active site" description="Nucleophile" evidence="1">
    <location>
        <position position="162"/>
    </location>
</feature>
<proteinExistence type="inferred from homology"/>
<organism>
    <name type="scientific">Bradyrhizobium diazoefficiens (strain JCM 10833 / BCRC 13528 / IAM 13628 / NBRC 14792 / USDA 110)</name>
    <dbReference type="NCBI Taxonomy" id="224911"/>
    <lineage>
        <taxon>Bacteria</taxon>
        <taxon>Pseudomonadati</taxon>
        <taxon>Pseudomonadota</taxon>
        <taxon>Alphaproteobacteria</taxon>
        <taxon>Hyphomicrobiales</taxon>
        <taxon>Nitrobacteraceae</taxon>
        <taxon>Bradyrhizobium</taxon>
    </lineage>
</organism>
<name>AMIF_BRADU</name>
<accession>Q89H51</accession>